<comment type="function">
    <text>Destroys radicals which are normally produced within the cells and which are toxic to biological systems.</text>
</comment>
<comment type="catalytic activity">
    <reaction>
        <text>2 superoxide + 2 H(+) = H2O2 + O2</text>
        <dbReference type="Rhea" id="RHEA:20696"/>
        <dbReference type="ChEBI" id="CHEBI:15378"/>
        <dbReference type="ChEBI" id="CHEBI:15379"/>
        <dbReference type="ChEBI" id="CHEBI:16240"/>
        <dbReference type="ChEBI" id="CHEBI:18421"/>
        <dbReference type="EC" id="1.15.1.1"/>
    </reaction>
</comment>
<comment type="cofactor">
    <cofactor evidence="1">
        <name>Cu cation</name>
        <dbReference type="ChEBI" id="CHEBI:23378"/>
    </cofactor>
    <text evidence="1">Binds 1 copper ion per subunit.</text>
</comment>
<comment type="cofactor">
    <cofactor evidence="1">
        <name>Zn(2+)</name>
        <dbReference type="ChEBI" id="CHEBI:29105"/>
    </cofactor>
    <text evidence="1">Binds 1 zinc ion per subunit.</text>
</comment>
<comment type="subunit">
    <text evidence="2">Homodimer, and heterodimer of Superoxide dismutase [Cu-Zn] A and B.</text>
</comment>
<comment type="subcellular location">
    <subcellularLocation>
        <location>Cytoplasm</location>
    </subcellularLocation>
    <subcellularLocation>
        <location evidence="1">Nucleus</location>
    </subcellularLocation>
</comment>
<comment type="developmental stage">
    <text evidence="3">Expressed both maternally and zygotically. Expression accumulates through oogenesis, remaining more or less constant at the beginning of embryogenesis, to slightly increase later on (at protein level).</text>
</comment>
<comment type="similarity">
    <text evidence="5">Belongs to the Cu-Zn superoxide dismutase family.</text>
</comment>
<comment type="sequence caution" evidence="5">
    <conflict type="erroneous initiation">
        <sequence resource="EMBL-CDS" id="AAI22467"/>
    </conflict>
</comment>
<gene>
    <name type="primary">sod1-a</name>
</gene>
<evidence type="ECO:0000250" key="1"/>
<evidence type="ECO:0000269" key="2">
    <source>
    </source>
</evidence>
<evidence type="ECO:0000269" key="3">
    <source>
    </source>
</evidence>
<evidence type="ECO:0000269" key="4">
    <source>
    </source>
</evidence>
<evidence type="ECO:0000305" key="5"/>
<feature type="initiator methionine" description="Removed" evidence="2 4">
    <location>
        <position position="1"/>
    </location>
</feature>
<feature type="chain" id="PRO_0000164076" description="Superoxide dismutase [Cu-Zn] A">
    <location>
        <begin position="2"/>
        <end position="151"/>
    </location>
</feature>
<feature type="binding site" evidence="1">
    <location>
        <position position="45"/>
    </location>
    <ligand>
        <name>Cu cation</name>
        <dbReference type="ChEBI" id="CHEBI:23378"/>
        <note>catalytic</note>
    </ligand>
</feature>
<feature type="binding site" evidence="1">
    <location>
        <position position="47"/>
    </location>
    <ligand>
        <name>Cu cation</name>
        <dbReference type="ChEBI" id="CHEBI:23378"/>
        <note>catalytic</note>
    </ligand>
</feature>
<feature type="binding site" evidence="1">
    <location>
        <position position="62"/>
    </location>
    <ligand>
        <name>Cu cation</name>
        <dbReference type="ChEBI" id="CHEBI:23378"/>
        <note>catalytic</note>
    </ligand>
</feature>
<feature type="binding site" evidence="1">
    <location>
        <position position="62"/>
    </location>
    <ligand>
        <name>Zn(2+)</name>
        <dbReference type="ChEBI" id="CHEBI:29105"/>
        <note>structural</note>
    </ligand>
</feature>
<feature type="binding site" evidence="1">
    <location>
        <position position="70"/>
    </location>
    <ligand>
        <name>Zn(2+)</name>
        <dbReference type="ChEBI" id="CHEBI:29105"/>
        <note>structural</note>
    </ligand>
</feature>
<feature type="binding site" evidence="1">
    <location>
        <position position="79"/>
    </location>
    <ligand>
        <name>Zn(2+)</name>
        <dbReference type="ChEBI" id="CHEBI:29105"/>
        <note>structural</note>
    </ligand>
</feature>
<feature type="binding site" evidence="1">
    <location>
        <position position="82"/>
    </location>
    <ligand>
        <name>Zn(2+)</name>
        <dbReference type="ChEBI" id="CHEBI:29105"/>
        <note>structural</note>
    </ligand>
</feature>
<feature type="binding site" evidence="1">
    <location>
        <position position="118"/>
    </location>
    <ligand>
        <name>Cu cation</name>
        <dbReference type="ChEBI" id="CHEBI:23378"/>
        <note>catalytic</note>
    </ligand>
</feature>
<feature type="lipid moiety-binding region" description="S-palmitoyl cysteine" evidence="1">
    <location>
        <position position="6"/>
    </location>
</feature>
<feature type="disulfide bond" evidence="1">
    <location>
        <begin position="56"/>
        <end position="144"/>
    </location>
</feature>
<dbReference type="EC" id="1.15.1.1"/>
<dbReference type="EMBL" id="X16585">
    <property type="protein sequence ID" value="CAA34602.1"/>
    <property type="molecule type" value="mRNA"/>
</dbReference>
<dbReference type="EMBL" id="BC108610">
    <property type="protein sequence ID" value="AAI08611.1"/>
    <property type="molecule type" value="mRNA"/>
</dbReference>
<dbReference type="EMBL" id="BC122466">
    <property type="protein sequence ID" value="AAI22467.1"/>
    <property type="status" value="ALT_INIT"/>
    <property type="molecule type" value="mRNA"/>
</dbReference>
<dbReference type="PIR" id="S05021">
    <property type="entry name" value="S05021"/>
</dbReference>
<dbReference type="RefSeq" id="XP_018104357.1">
    <property type="nucleotide sequence ID" value="XM_018248868.1"/>
</dbReference>
<dbReference type="SMR" id="P13926"/>
<dbReference type="AGR" id="Xenbase:XB-GENE-6252314"/>
<dbReference type="Xenbase" id="XB-GENE-6252314">
    <property type="gene designation" value="sod1.S"/>
</dbReference>
<dbReference type="OMA" id="GARYACG"/>
<dbReference type="OrthoDB" id="2015551at2759"/>
<dbReference type="Proteomes" id="UP000186698">
    <property type="component" value="Unplaced"/>
</dbReference>
<dbReference type="Bgee" id="100381040">
    <property type="expression patterns" value="Expressed in oocyte and 19 other cell types or tissues"/>
</dbReference>
<dbReference type="GO" id="GO:0005829">
    <property type="term" value="C:cytosol"/>
    <property type="evidence" value="ECO:0000318"/>
    <property type="project" value="GO_Central"/>
</dbReference>
<dbReference type="GO" id="GO:0005739">
    <property type="term" value="C:mitochondrion"/>
    <property type="evidence" value="ECO:0000318"/>
    <property type="project" value="GO_Central"/>
</dbReference>
<dbReference type="GO" id="GO:0005634">
    <property type="term" value="C:nucleus"/>
    <property type="evidence" value="ECO:0000318"/>
    <property type="project" value="GO_Central"/>
</dbReference>
<dbReference type="GO" id="GO:0005777">
    <property type="term" value="C:peroxisome"/>
    <property type="evidence" value="ECO:0000318"/>
    <property type="project" value="GO_Central"/>
</dbReference>
<dbReference type="GO" id="GO:0005507">
    <property type="term" value="F:copper ion binding"/>
    <property type="evidence" value="ECO:0000318"/>
    <property type="project" value="GO_Central"/>
</dbReference>
<dbReference type="GO" id="GO:0004784">
    <property type="term" value="F:superoxide dismutase activity"/>
    <property type="evidence" value="ECO:0000318"/>
    <property type="project" value="GO_Central"/>
</dbReference>
<dbReference type="GO" id="GO:0019430">
    <property type="term" value="P:removal of superoxide radicals"/>
    <property type="evidence" value="ECO:0000318"/>
    <property type="project" value="GO_Central"/>
</dbReference>
<dbReference type="CDD" id="cd00305">
    <property type="entry name" value="Cu-Zn_Superoxide_Dismutase"/>
    <property type="match status" value="1"/>
</dbReference>
<dbReference type="FunFam" id="2.60.40.200:FF:000001">
    <property type="entry name" value="Superoxide dismutase [Cu-Zn]"/>
    <property type="match status" value="1"/>
</dbReference>
<dbReference type="Gene3D" id="2.60.40.200">
    <property type="entry name" value="Superoxide dismutase, copper/zinc binding domain"/>
    <property type="match status" value="1"/>
</dbReference>
<dbReference type="InterPro" id="IPR036423">
    <property type="entry name" value="SOD-like_Cu/Zn_dom_sf"/>
</dbReference>
<dbReference type="InterPro" id="IPR024134">
    <property type="entry name" value="SOD_Cu/Zn_/chaperone"/>
</dbReference>
<dbReference type="InterPro" id="IPR018152">
    <property type="entry name" value="SOD_Cu/Zn_BS"/>
</dbReference>
<dbReference type="InterPro" id="IPR001424">
    <property type="entry name" value="SOD_Cu_Zn_dom"/>
</dbReference>
<dbReference type="PANTHER" id="PTHR10003">
    <property type="entry name" value="SUPEROXIDE DISMUTASE CU-ZN -RELATED"/>
    <property type="match status" value="1"/>
</dbReference>
<dbReference type="Pfam" id="PF00080">
    <property type="entry name" value="Sod_Cu"/>
    <property type="match status" value="1"/>
</dbReference>
<dbReference type="PRINTS" id="PR00068">
    <property type="entry name" value="CUZNDISMTASE"/>
</dbReference>
<dbReference type="SUPFAM" id="SSF49329">
    <property type="entry name" value="Cu,Zn superoxide dismutase-like"/>
    <property type="match status" value="1"/>
</dbReference>
<dbReference type="PROSITE" id="PS00087">
    <property type="entry name" value="SOD_CU_ZN_1"/>
    <property type="match status" value="1"/>
</dbReference>
<dbReference type="PROSITE" id="PS00332">
    <property type="entry name" value="SOD_CU_ZN_2"/>
    <property type="match status" value="1"/>
</dbReference>
<sequence length="151" mass="15721">MVKAVCVLAGSGDVKGVVRFEQQDDGDVTVEGKIEGLTDGNHGFHIHVFGDNTNGCLSAGPHFNPQNKNHGSPKDADRHVGDLGNVTAEGGVAQFKFTDPQISLKGERSIIGRTAVVHEKQDDLGKGGDDESLKTGNAGGRLACGVIGFCP</sequence>
<keyword id="KW-0049">Antioxidant</keyword>
<keyword id="KW-0186">Copper</keyword>
<keyword id="KW-0963">Cytoplasm</keyword>
<keyword id="KW-0903">Direct protein sequencing</keyword>
<keyword id="KW-1015">Disulfide bond</keyword>
<keyword id="KW-0449">Lipoprotein</keyword>
<keyword id="KW-0479">Metal-binding</keyword>
<keyword id="KW-0539">Nucleus</keyword>
<keyword id="KW-0560">Oxidoreductase</keyword>
<keyword id="KW-0564">Palmitate</keyword>
<keyword id="KW-1185">Reference proteome</keyword>
<keyword id="KW-0862">Zinc</keyword>
<protein>
    <recommendedName>
        <fullName>Superoxide dismutase [Cu-Zn] A</fullName>
        <shortName>XSODA</shortName>
        <ecNumber>1.15.1.1</ecNumber>
    </recommendedName>
</protein>
<proteinExistence type="evidence at protein level"/>
<reference key="1">
    <citation type="journal article" date="1989" name="Eur. J. Biochem.">
        <title>Developmental expression of Cu,Zn superoxide dismutase in Xenopus. Constant level of the enzyme in oogenesis and embryogenesis.</title>
        <authorList>
            <person name="Montesano L."/>
            <person name="Carri M.T."/>
            <person name="Mariottini P."/>
            <person name="Amaldi F."/>
            <person name="Rotilio G."/>
        </authorList>
    </citation>
    <scope>NUCLEOTIDE SEQUENCE [MRNA]</scope>
    <scope>DEVELOPMENTAL STAGE</scope>
    <source>
        <tissue>Oocyte</tissue>
    </source>
</reference>
<reference key="2">
    <citation type="submission" date="2006-08" db="EMBL/GenBank/DDBJ databases">
        <authorList>
            <consortium name="NIH - Xenopus Gene Collection (XGC) project"/>
        </authorList>
    </citation>
    <scope>NUCLEOTIDE SEQUENCE [LARGE SCALE MRNA]</scope>
    <source>
        <tissue>Testis</tissue>
    </source>
</reference>
<reference key="3">
    <citation type="journal article" date="1989" name="Arch. Biochem. Biophys.">
        <title>Primary structure from amino acid and cDNA sequences of two Cu,Zn superoxide dismutase variants from Xenopus laevis.</title>
        <authorList>
            <person name="Schinina M.E."/>
            <person name="Barra D."/>
            <person name="Bossa F."/>
            <person name="Calabrese L."/>
            <person name="Montesano L."/>
            <person name="Carri M.T."/>
            <person name="Mariottini P."/>
            <person name="Amaldi F."/>
            <person name="Rotilio G."/>
        </authorList>
    </citation>
    <scope>PROTEIN SEQUENCE OF 2-151</scope>
</reference>
<reference key="4">
    <citation type="journal article" date="1990" name="Biochem. Biophys. Res. Commun.">
        <title>The Cu,Zn superoxide dismutase isoenzymes of Xenopus laevis: purification, identification of a heterodimer and differential heat sensitivity.</title>
        <authorList>
            <person name="Capo C.R."/>
            <person name="Polticelli F."/>
            <person name="Calabrese L."/>
            <person name="Schinina M.E."/>
            <person name="Carri M.T."/>
            <person name="Rotilio G."/>
        </authorList>
    </citation>
    <scope>PROTEIN SEQUENCE OF 2-31</scope>
    <scope>SUBUNIT</scope>
</reference>
<reference key="5">
    <citation type="journal article" date="1991" name="Proteins">
        <title>Modelling the three-dimensional structure and electrostatic potential field of the two Cu,Zn superoxide dismutase variants from Xenopus laevis.</title>
        <authorList>
            <person name="Falconi M."/>
            <person name="Rotilio G."/>
            <person name="Desideri A."/>
        </authorList>
    </citation>
    <scope>3D-STRUCTURE MODELING</scope>
</reference>
<organism>
    <name type="scientific">Xenopus laevis</name>
    <name type="common">African clawed frog</name>
    <dbReference type="NCBI Taxonomy" id="8355"/>
    <lineage>
        <taxon>Eukaryota</taxon>
        <taxon>Metazoa</taxon>
        <taxon>Chordata</taxon>
        <taxon>Craniata</taxon>
        <taxon>Vertebrata</taxon>
        <taxon>Euteleostomi</taxon>
        <taxon>Amphibia</taxon>
        <taxon>Batrachia</taxon>
        <taxon>Anura</taxon>
        <taxon>Pipoidea</taxon>
        <taxon>Pipidae</taxon>
        <taxon>Xenopodinae</taxon>
        <taxon>Xenopus</taxon>
        <taxon>Xenopus</taxon>
    </lineage>
</organism>
<name>SOD1A_XENLA</name>
<accession>P13926</accession>
<accession>Q0P3T2</accession>
<accession>Q2VPM0</accession>